<evidence type="ECO:0000250" key="1"/>
<evidence type="ECO:0000256" key="2">
    <source>
        <dbReference type="SAM" id="MobiDB-lite"/>
    </source>
</evidence>
<evidence type="ECO:0000305" key="3"/>
<organism>
    <name type="scientific">Saccharomyces cerevisiae (strain Lalvin EC1118 / Prise de mousse)</name>
    <name type="common">Baker's yeast</name>
    <dbReference type="NCBI Taxonomy" id="643680"/>
    <lineage>
        <taxon>Eukaryota</taxon>
        <taxon>Fungi</taxon>
        <taxon>Dikarya</taxon>
        <taxon>Ascomycota</taxon>
        <taxon>Saccharomycotina</taxon>
        <taxon>Saccharomycetes</taxon>
        <taxon>Saccharomycetales</taxon>
        <taxon>Saccharomycetaceae</taxon>
        <taxon>Saccharomyces</taxon>
    </lineage>
</organism>
<feature type="chain" id="PRO_0000399017" description="Damage-regulated import facilitator 1">
    <location>
        <begin position="1"/>
        <end position="133"/>
    </location>
</feature>
<feature type="region of interest" description="Disordered" evidence="2">
    <location>
        <begin position="1"/>
        <end position="40"/>
    </location>
</feature>
<feature type="compositionally biased region" description="Low complexity" evidence="2">
    <location>
        <begin position="16"/>
        <end position="32"/>
    </location>
</feature>
<dbReference type="EMBL" id="FN393080">
    <property type="protein sequence ID" value="CAY81659.1"/>
    <property type="molecule type" value="Genomic_DNA"/>
</dbReference>
<dbReference type="SMR" id="C8ZE43"/>
<dbReference type="HOGENOM" id="CLU_1887371_0_0_1"/>
<dbReference type="OrthoDB" id="25352at4893"/>
<dbReference type="Proteomes" id="UP000000286">
    <property type="component" value="Chromosome XII, Scaffold EC1118_1L7"/>
</dbReference>
<dbReference type="GO" id="GO:0005737">
    <property type="term" value="C:cytoplasm"/>
    <property type="evidence" value="ECO:0007669"/>
    <property type="project" value="UniProtKB-SubCell"/>
</dbReference>
<dbReference type="GO" id="GO:0005634">
    <property type="term" value="C:nucleus"/>
    <property type="evidence" value="ECO:0007669"/>
    <property type="project" value="UniProtKB-SubCell"/>
</dbReference>
<dbReference type="GO" id="GO:1990846">
    <property type="term" value="F:ribonucleoside-diphosphate reductase inhibitor activity"/>
    <property type="evidence" value="ECO:0007669"/>
    <property type="project" value="TreeGrafter"/>
</dbReference>
<dbReference type="GO" id="GO:0008104">
    <property type="term" value="P:protein localization"/>
    <property type="evidence" value="ECO:0007669"/>
    <property type="project" value="TreeGrafter"/>
</dbReference>
<dbReference type="InterPro" id="IPR013900">
    <property type="entry name" value="RNR_inhibitor"/>
</dbReference>
<dbReference type="PANTHER" id="PTHR28081:SF1">
    <property type="entry name" value="DAMAGE-REGULATED IMPORT FACILITATOR 1"/>
    <property type="match status" value="1"/>
</dbReference>
<dbReference type="PANTHER" id="PTHR28081">
    <property type="entry name" value="DAMAGE-REGULATED IMPORT FACILITATOR 1-RELATED"/>
    <property type="match status" value="1"/>
</dbReference>
<protein>
    <recommendedName>
        <fullName>Damage-regulated import facilitator 1</fullName>
    </recommendedName>
</protein>
<gene>
    <name type="primary">DIF1</name>
    <name type="ORF">EC1118_1L7_3213g</name>
</gene>
<sequence>MDAQLEWASSLVPKRQLQQQQQQQEQQQQQQQDFHKDQLMTVGMRIRQRVDQGYASRTPSTSDASLQPGVIRDYSSVIVPQFTRSPLPTANSLPPMLINQRTMSTEASSLEKWDVAEPAAEHEAMVNGSKRRL</sequence>
<name>DIF1_YEAS8</name>
<proteinExistence type="inferred from homology"/>
<keyword id="KW-0963">Cytoplasm</keyword>
<keyword id="KW-0539">Nucleus</keyword>
<keyword id="KW-0597">Phosphoprotein</keyword>
<comment type="function">
    <text evidence="1">Mediates the nuclear localization of RNR2 and RNR4, 2 subunits of the ribonucleotide reductase.</text>
</comment>
<comment type="subunit">
    <text evidence="1">Interacts with RNR2 and RNR4.</text>
</comment>
<comment type="subcellular location">
    <subcellularLocation>
        <location evidence="1">Cytoplasm</location>
    </subcellularLocation>
    <subcellularLocation>
        <location evidence="1">Nucleus</location>
    </subcellularLocation>
</comment>
<comment type="PTM">
    <text evidence="1">Phosphorylated by DUN1 in response to DNA damage which leads to its degradation.</text>
</comment>
<comment type="similarity">
    <text evidence="3">Belongs to the DIF1/spd1 family.</text>
</comment>
<accession>C8ZE43</accession>
<reference key="1">
    <citation type="journal article" date="2009" name="Proc. Natl. Acad. Sci. U.S.A.">
        <title>Eukaryote-to-eukaryote gene transfer events revealed by the genome sequence of the wine yeast Saccharomyces cerevisiae EC1118.</title>
        <authorList>
            <person name="Novo M."/>
            <person name="Bigey F."/>
            <person name="Beyne E."/>
            <person name="Galeote V."/>
            <person name="Gavory F."/>
            <person name="Mallet S."/>
            <person name="Cambon B."/>
            <person name="Legras J.-L."/>
            <person name="Wincker P."/>
            <person name="Casaregola S."/>
            <person name="Dequin S."/>
        </authorList>
    </citation>
    <scope>NUCLEOTIDE SEQUENCE [LARGE SCALE GENOMIC DNA]</scope>
    <source>
        <strain>Lalvin EC1118 / Prise de mousse</strain>
    </source>
</reference>